<accession>B1LFQ6</accession>
<proteinExistence type="inferred from homology"/>
<feature type="chain" id="PRO_1000135749" description="UPF0213 protein YhbQ">
    <location>
        <begin position="1"/>
        <end position="100"/>
    </location>
</feature>
<feature type="domain" description="GIY-YIG" evidence="1">
    <location>
        <begin position="2"/>
        <end position="77"/>
    </location>
</feature>
<reference key="1">
    <citation type="journal article" date="2008" name="J. Bacteriol.">
        <title>Insights into the environmental resistance gene pool from the genome sequence of the multidrug-resistant environmental isolate Escherichia coli SMS-3-5.</title>
        <authorList>
            <person name="Fricke W.F."/>
            <person name="Wright M.S."/>
            <person name="Lindell A.H."/>
            <person name="Harkins D.M."/>
            <person name="Baker-Austin C."/>
            <person name="Ravel J."/>
            <person name="Stepanauskas R."/>
        </authorList>
    </citation>
    <scope>NUCLEOTIDE SEQUENCE [LARGE SCALE GENOMIC DNA]</scope>
    <source>
        <strain>SMS-3-5 / SECEC</strain>
    </source>
</reference>
<evidence type="ECO:0000255" key="1">
    <source>
        <dbReference type="HAMAP-Rule" id="MF_01029"/>
    </source>
</evidence>
<name>YHBQ_ECOSM</name>
<organism>
    <name type="scientific">Escherichia coli (strain SMS-3-5 / SECEC)</name>
    <dbReference type="NCBI Taxonomy" id="439855"/>
    <lineage>
        <taxon>Bacteria</taxon>
        <taxon>Pseudomonadati</taxon>
        <taxon>Pseudomonadota</taxon>
        <taxon>Gammaproteobacteria</taxon>
        <taxon>Enterobacterales</taxon>
        <taxon>Enterobacteriaceae</taxon>
        <taxon>Escherichia</taxon>
    </lineage>
</organism>
<comment type="similarity">
    <text evidence="1">Belongs to the UPF0213 family.</text>
</comment>
<dbReference type="EMBL" id="CP000970">
    <property type="protein sequence ID" value="ACB17831.1"/>
    <property type="molecule type" value="Genomic_DNA"/>
</dbReference>
<dbReference type="RefSeq" id="WP_000189315.1">
    <property type="nucleotide sequence ID" value="NC_010498.1"/>
</dbReference>
<dbReference type="SMR" id="B1LFQ6"/>
<dbReference type="KEGG" id="ecm:EcSMS35_3451"/>
<dbReference type="HOGENOM" id="CLU_135650_0_1_6"/>
<dbReference type="Proteomes" id="UP000007011">
    <property type="component" value="Chromosome"/>
</dbReference>
<dbReference type="CDD" id="cd10456">
    <property type="entry name" value="GIY-YIG_UPF0213"/>
    <property type="match status" value="1"/>
</dbReference>
<dbReference type="FunFam" id="3.40.1440.10:FF:000002">
    <property type="entry name" value="UPF0213 protein YhbQ"/>
    <property type="match status" value="1"/>
</dbReference>
<dbReference type="Gene3D" id="3.40.1440.10">
    <property type="entry name" value="GIY-YIG endonuclease"/>
    <property type="match status" value="1"/>
</dbReference>
<dbReference type="HAMAP" id="MF_01029">
    <property type="entry name" value="UPF0213"/>
    <property type="match status" value="1"/>
</dbReference>
<dbReference type="InterPro" id="IPR000305">
    <property type="entry name" value="GIY-YIG_endonuc"/>
</dbReference>
<dbReference type="InterPro" id="IPR035901">
    <property type="entry name" value="GIY-YIG_endonuc_sf"/>
</dbReference>
<dbReference type="InterPro" id="IPR050190">
    <property type="entry name" value="UPF0213_domain"/>
</dbReference>
<dbReference type="InterPro" id="IPR022992">
    <property type="entry name" value="UPF0213_GIY-YIG_endonuc"/>
</dbReference>
<dbReference type="PANTHER" id="PTHR34477">
    <property type="entry name" value="UPF0213 PROTEIN YHBQ"/>
    <property type="match status" value="1"/>
</dbReference>
<dbReference type="PANTHER" id="PTHR34477:SF1">
    <property type="entry name" value="UPF0213 PROTEIN YHBQ"/>
    <property type="match status" value="1"/>
</dbReference>
<dbReference type="Pfam" id="PF01541">
    <property type="entry name" value="GIY-YIG"/>
    <property type="match status" value="1"/>
</dbReference>
<dbReference type="SMART" id="SM00465">
    <property type="entry name" value="GIYc"/>
    <property type="match status" value="1"/>
</dbReference>
<dbReference type="SUPFAM" id="SSF82771">
    <property type="entry name" value="GIY-YIG endonuclease"/>
    <property type="match status" value="1"/>
</dbReference>
<dbReference type="PROSITE" id="PS50164">
    <property type="entry name" value="GIY_YIG"/>
    <property type="match status" value="1"/>
</dbReference>
<sequence>MTPWFLYLIRTADNKLYTGITTDVERRYQQHQSGKGAKALRGKGELTLAFSAPVGDRSLALRAEYRVKQLTKRQKERLVAEGAGFAELLSSLQTPKIKSD</sequence>
<gene>
    <name evidence="1" type="primary">yhbQ</name>
    <name type="ordered locus">EcSMS35_3451</name>
</gene>
<protein>
    <recommendedName>
        <fullName evidence="1">UPF0213 protein YhbQ</fullName>
    </recommendedName>
</protein>